<comment type="function">
    <text evidence="1">Component of the cytochrome b6-f complex, which mediates electron transfer between photosystem II (PSII) and photosystem I (PSI), cyclic electron flow around PSI, and state transitions.</text>
</comment>
<comment type="cofactor">
    <cofactor evidence="1">
        <name>heme b</name>
        <dbReference type="ChEBI" id="CHEBI:60344"/>
    </cofactor>
    <text evidence="1">Binds 2 heme b groups non-covalently with two histidine residues as axial ligands.</text>
</comment>
<comment type="cofactor">
    <cofactor evidence="1">
        <name>heme c</name>
        <dbReference type="ChEBI" id="CHEBI:61717"/>
    </cofactor>
    <text evidence="1">Binds one heme group covalently by a single cysteine link with no axial amino acid ligand. This heme was named heme ci.</text>
</comment>
<comment type="subunit">
    <text evidence="1">The 4 large subunits of the cytochrome b6-f complex are cytochrome b6, subunit IV (17 kDa polypeptide, PetD), cytochrome f and the Rieske protein, while the 4 small subunits are PetG, PetL, PetM and PetN. The complex functions as a dimer.</text>
</comment>
<comment type="subcellular location">
    <subcellularLocation>
        <location evidence="1">Plastid</location>
        <location evidence="1">Chloroplast thylakoid membrane</location>
        <topology evidence="1">Multi-pass membrane protein</topology>
    </subcellularLocation>
</comment>
<comment type="miscellaneous">
    <text evidence="1">Heme 1 (or BH or b566) is high-potential and absorbs at about 566 nm, and heme 2 (or BL or b562) is low-potential and absorbs at about 562 nm.</text>
</comment>
<comment type="similarity">
    <text evidence="1">Belongs to the cytochrome b family. PetB subfamily.</text>
</comment>
<protein>
    <recommendedName>
        <fullName evidence="1">Cytochrome b6</fullName>
    </recommendedName>
</protein>
<gene>
    <name evidence="1" type="primary">petB</name>
</gene>
<geneLocation type="chloroplast"/>
<feature type="chain" id="PRO_0000061804" description="Cytochrome b6">
    <location>
        <begin position="1"/>
        <end position="215"/>
    </location>
</feature>
<feature type="transmembrane region" description="Helical" evidence="1">
    <location>
        <begin position="32"/>
        <end position="52"/>
    </location>
</feature>
<feature type="transmembrane region" description="Helical" evidence="1">
    <location>
        <begin position="90"/>
        <end position="110"/>
    </location>
</feature>
<feature type="transmembrane region" description="Helical" evidence="1">
    <location>
        <begin position="116"/>
        <end position="136"/>
    </location>
</feature>
<feature type="transmembrane region" description="Helical" evidence="1">
    <location>
        <begin position="186"/>
        <end position="206"/>
    </location>
</feature>
<feature type="binding site" description="covalent" evidence="1">
    <location>
        <position position="35"/>
    </location>
    <ligand>
        <name>heme c</name>
        <dbReference type="ChEBI" id="CHEBI:61717"/>
    </ligand>
</feature>
<feature type="binding site" description="axial binding residue" evidence="1">
    <location>
        <position position="86"/>
    </location>
    <ligand>
        <name>heme b</name>
        <dbReference type="ChEBI" id="CHEBI:60344"/>
        <label>2</label>
    </ligand>
    <ligandPart>
        <name>Fe</name>
        <dbReference type="ChEBI" id="CHEBI:18248"/>
    </ligandPart>
</feature>
<feature type="binding site" description="axial binding residue" evidence="1">
    <location>
        <position position="100"/>
    </location>
    <ligand>
        <name>heme b</name>
        <dbReference type="ChEBI" id="CHEBI:60344"/>
        <label>1</label>
    </ligand>
    <ligandPart>
        <name>Fe</name>
        <dbReference type="ChEBI" id="CHEBI:18248"/>
    </ligandPart>
</feature>
<feature type="binding site" description="axial binding residue" evidence="1">
    <location>
        <position position="187"/>
    </location>
    <ligand>
        <name>heme b</name>
        <dbReference type="ChEBI" id="CHEBI:60344"/>
        <label>2</label>
    </ligand>
    <ligandPart>
        <name>Fe</name>
        <dbReference type="ChEBI" id="CHEBI:18248"/>
    </ligandPart>
</feature>
<feature type="binding site" description="axial binding residue" evidence="1">
    <location>
        <position position="202"/>
    </location>
    <ligand>
        <name>heme b</name>
        <dbReference type="ChEBI" id="CHEBI:60344"/>
        <label>1</label>
    </ligand>
    <ligandPart>
        <name>Fe</name>
        <dbReference type="ChEBI" id="CHEBI:18248"/>
    </ligandPart>
</feature>
<organism>
    <name type="scientific">Nephroselmis olivacea</name>
    <name type="common">Green alga</name>
    <dbReference type="NCBI Taxonomy" id="31312"/>
    <lineage>
        <taxon>Eukaryota</taxon>
        <taxon>Viridiplantae</taxon>
        <taxon>Chlorophyta</taxon>
        <taxon>Nephroselmidophyceae</taxon>
        <taxon>Nephroselmidales</taxon>
        <taxon>Nephroselmidaceae</taxon>
        <taxon>Nephroselmis</taxon>
    </lineage>
</organism>
<proteinExistence type="inferred from homology"/>
<keyword id="KW-0150">Chloroplast</keyword>
<keyword id="KW-0249">Electron transport</keyword>
<keyword id="KW-0349">Heme</keyword>
<keyword id="KW-0408">Iron</keyword>
<keyword id="KW-0472">Membrane</keyword>
<keyword id="KW-0479">Metal-binding</keyword>
<keyword id="KW-0602">Photosynthesis</keyword>
<keyword id="KW-0934">Plastid</keyword>
<keyword id="KW-0793">Thylakoid</keyword>
<keyword id="KW-0812">Transmembrane</keyword>
<keyword id="KW-1133">Transmembrane helix</keyword>
<keyword id="KW-0813">Transport</keyword>
<sequence length="215" mass="24297">MSKIYDWFEERLEIQAIADDITSKYVPPHVNIFYCFGGITLTCFLIQVATGFAMTFYYRPTVTEAFASVEYIMTNVNFGWLIRSIHRWSASMMVMMLILHVFRVYLTGGFKKPRELTWVTGVILAVITVSFGVTGYSLPWDQVGYWAVKIVTGVPDAIPVIGAPLVELLRGSVSVGQSTLTRFYSLHTFVLPLLTAVFMLMHFLMIRKQGISGPL</sequence>
<dbReference type="EMBL" id="AF137379">
    <property type="protein sequence ID" value="AAD54785.1"/>
    <property type="molecule type" value="Genomic_DNA"/>
</dbReference>
<dbReference type="RefSeq" id="NP_050814.1">
    <property type="nucleotide sequence ID" value="NC_000927.1"/>
</dbReference>
<dbReference type="SMR" id="Q9TL31"/>
<dbReference type="GeneID" id="802006"/>
<dbReference type="GO" id="GO:0009535">
    <property type="term" value="C:chloroplast thylakoid membrane"/>
    <property type="evidence" value="ECO:0007669"/>
    <property type="project" value="UniProtKB-SubCell"/>
</dbReference>
<dbReference type="GO" id="GO:0045158">
    <property type="term" value="F:electron transporter, transferring electrons within cytochrome b6/f complex of photosystem II activity"/>
    <property type="evidence" value="ECO:0007669"/>
    <property type="project" value="UniProtKB-UniRule"/>
</dbReference>
<dbReference type="GO" id="GO:0046872">
    <property type="term" value="F:metal ion binding"/>
    <property type="evidence" value="ECO:0007669"/>
    <property type="project" value="UniProtKB-KW"/>
</dbReference>
<dbReference type="GO" id="GO:0016491">
    <property type="term" value="F:oxidoreductase activity"/>
    <property type="evidence" value="ECO:0007669"/>
    <property type="project" value="InterPro"/>
</dbReference>
<dbReference type="GO" id="GO:0015979">
    <property type="term" value="P:photosynthesis"/>
    <property type="evidence" value="ECO:0007669"/>
    <property type="project" value="UniProtKB-UniRule"/>
</dbReference>
<dbReference type="GO" id="GO:0022904">
    <property type="term" value="P:respiratory electron transport chain"/>
    <property type="evidence" value="ECO:0007669"/>
    <property type="project" value="InterPro"/>
</dbReference>
<dbReference type="CDD" id="cd00284">
    <property type="entry name" value="Cytochrome_b_N"/>
    <property type="match status" value="1"/>
</dbReference>
<dbReference type="FunFam" id="1.20.810.10:FF:000001">
    <property type="entry name" value="Cytochrome b6"/>
    <property type="match status" value="1"/>
</dbReference>
<dbReference type="Gene3D" id="1.20.810.10">
    <property type="entry name" value="Cytochrome Bc1 Complex, Chain C"/>
    <property type="match status" value="1"/>
</dbReference>
<dbReference type="HAMAP" id="MF_00633">
    <property type="entry name" value="Cytb6_f_cytb6"/>
    <property type="match status" value="1"/>
</dbReference>
<dbReference type="InterPro" id="IPR005797">
    <property type="entry name" value="Cyt_b/b6_N"/>
</dbReference>
<dbReference type="InterPro" id="IPR023530">
    <property type="entry name" value="Cyt_B6_PetB"/>
</dbReference>
<dbReference type="InterPro" id="IPR027387">
    <property type="entry name" value="Cytb/b6-like_sf"/>
</dbReference>
<dbReference type="InterPro" id="IPR048259">
    <property type="entry name" value="Cytochrome_b_N_euk/bac"/>
</dbReference>
<dbReference type="InterPro" id="IPR016174">
    <property type="entry name" value="Di-haem_cyt_TM"/>
</dbReference>
<dbReference type="NCBIfam" id="NF002990">
    <property type="entry name" value="PRK03735.1"/>
    <property type="match status" value="1"/>
</dbReference>
<dbReference type="PANTHER" id="PTHR19271">
    <property type="entry name" value="CYTOCHROME B"/>
    <property type="match status" value="1"/>
</dbReference>
<dbReference type="PANTHER" id="PTHR19271:SF16">
    <property type="entry name" value="CYTOCHROME B"/>
    <property type="match status" value="1"/>
</dbReference>
<dbReference type="Pfam" id="PF00033">
    <property type="entry name" value="Cytochrome_B"/>
    <property type="match status" value="1"/>
</dbReference>
<dbReference type="PIRSF" id="PIRSF000032">
    <property type="entry name" value="Cytochrome_b6"/>
    <property type="match status" value="1"/>
</dbReference>
<dbReference type="SUPFAM" id="SSF81342">
    <property type="entry name" value="Transmembrane di-heme cytochromes"/>
    <property type="match status" value="1"/>
</dbReference>
<dbReference type="PROSITE" id="PS51002">
    <property type="entry name" value="CYTB_NTER"/>
    <property type="match status" value="1"/>
</dbReference>
<accession>Q9TL31</accession>
<reference key="1">
    <citation type="journal article" date="1999" name="Proc. Natl. Acad. Sci. U.S.A.">
        <title>The complete chloroplast DNA sequence of the green alga Nephroselmis olivacea: insights into the architecture of ancestral chloroplast genomes.</title>
        <authorList>
            <person name="Turmel M."/>
            <person name="Otis C."/>
            <person name="Lemieux C."/>
        </authorList>
    </citation>
    <scope>NUCLEOTIDE SEQUENCE [LARGE SCALE GENOMIC DNA]</scope>
    <source>
        <strain>NIES-484 / S-N-5-8</strain>
    </source>
</reference>
<evidence type="ECO:0000255" key="1">
    <source>
        <dbReference type="HAMAP-Rule" id="MF_00633"/>
    </source>
</evidence>
<name>CYB6_NEPOL</name>